<protein>
    <recommendedName>
        <fullName evidence="6">Probable 7-methylxanthine methyltransferase 5</fullName>
        <ecNumber evidence="1">2.1.1.159</ecNumber>
    </recommendedName>
    <alternativeName>
        <fullName evidence="6">Theobromine synthase TCM_042587/TCM_042590</fullName>
    </alternativeName>
</protein>
<comment type="function">
    <text evidence="1">Involved in the biosynthesis of theobromine.</text>
</comment>
<comment type="catalytic activity">
    <reaction evidence="1">
        <text>7-methylxanthine + S-adenosyl-L-methionine = theobromine + S-adenosyl-L-homocysteine + H(+)</text>
        <dbReference type="Rhea" id="RHEA:24604"/>
        <dbReference type="ChEBI" id="CHEBI:15378"/>
        <dbReference type="ChEBI" id="CHEBI:28946"/>
        <dbReference type="ChEBI" id="CHEBI:48991"/>
        <dbReference type="ChEBI" id="CHEBI:57856"/>
        <dbReference type="ChEBI" id="CHEBI:59789"/>
        <dbReference type="EC" id="2.1.1.159"/>
    </reaction>
    <physiologicalReaction direction="left-to-right" evidence="1">
        <dbReference type="Rhea" id="RHEA:24605"/>
    </physiologicalReaction>
</comment>
<comment type="cofactor">
    <cofactor evidence="4">
        <name>Mg(2+)</name>
        <dbReference type="ChEBI" id="CHEBI:18420"/>
    </cofactor>
    <text evidence="4">Binds 1 Mg(2+) ion per subunit.</text>
</comment>
<comment type="pathway">
    <text evidence="1">Alkaloid biosynthesis.</text>
</comment>
<comment type="alternative products">
    <event type="alternative splicing"/>
    <isoform>
        <id>A0A061FKM4-1</id>
        <name>1</name>
        <sequence type="displayed"/>
    </isoform>
    <isoform>
        <id>A0A061FKM4-2</id>
        <name>2</name>
        <sequence type="described" ref="VSP_060870"/>
    </isoform>
    <isoform>
        <id>A0A061FKM4-3</id>
        <name>3</name>
        <sequence type="described" ref="VSP_060868 VSP_060869"/>
    </isoform>
    <isoform>
        <id>A0A061FKM4-4</id>
        <name>4</name>
        <sequence type="described" ref="VSP_060867"/>
    </isoform>
</comment>
<comment type="similarity">
    <text evidence="6">Belongs to the methyltransferase superfamily. Type-7 methyltransferase family.</text>
</comment>
<feature type="chain" id="PRO_0000451787" description="Probable 7-methylxanthine methyltransferase 5">
    <location>
        <begin position="1"/>
        <end position="364"/>
    </location>
</feature>
<feature type="binding site" evidence="2">
    <location>
        <position position="19"/>
    </location>
    <ligand>
        <name>S-adenosyl-L-homocysteine</name>
        <dbReference type="ChEBI" id="CHEBI:57856"/>
    </ligand>
</feature>
<feature type="binding site" evidence="2">
    <location>
        <position position="26"/>
    </location>
    <ligand>
        <name>theobromine</name>
        <dbReference type="ChEBI" id="CHEBI:28946"/>
    </ligand>
</feature>
<feature type="binding site" evidence="2">
    <location>
        <position position="64"/>
    </location>
    <ligand>
        <name>S-adenosyl-L-homocysteine</name>
        <dbReference type="ChEBI" id="CHEBI:57856"/>
    </ligand>
</feature>
<feature type="binding site" evidence="2">
    <location>
        <position position="69"/>
    </location>
    <ligand>
        <name>S-adenosyl-L-homocysteine</name>
        <dbReference type="ChEBI" id="CHEBI:57856"/>
    </ligand>
</feature>
<feature type="binding site" evidence="2">
    <location>
        <position position="101"/>
    </location>
    <ligand>
        <name>S-adenosyl-L-homocysteine</name>
        <dbReference type="ChEBI" id="CHEBI:57856"/>
    </ligand>
</feature>
<feature type="binding site" evidence="2">
    <location>
        <position position="102"/>
    </location>
    <ligand>
        <name>S-adenosyl-L-homocysteine</name>
        <dbReference type="ChEBI" id="CHEBI:57856"/>
    </ligand>
</feature>
<feature type="binding site" evidence="2">
    <location>
        <position position="134"/>
    </location>
    <ligand>
        <name>S-adenosyl-L-homocysteine</name>
        <dbReference type="ChEBI" id="CHEBI:57856"/>
    </ligand>
</feature>
<feature type="binding site" evidence="2">
    <location>
        <position position="135"/>
    </location>
    <ligand>
        <name>S-adenosyl-L-homocysteine</name>
        <dbReference type="ChEBI" id="CHEBI:57856"/>
    </ligand>
</feature>
<feature type="binding site" evidence="2">
    <location>
        <position position="152"/>
    </location>
    <ligand>
        <name>theobromine</name>
        <dbReference type="ChEBI" id="CHEBI:28946"/>
    </ligand>
</feature>
<feature type="binding site" evidence="2">
    <location>
        <position position="155"/>
    </location>
    <ligand>
        <name>theobromine</name>
        <dbReference type="ChEBI" id="CHEBI:28946"/>
    </ligand>
</feature>
<feature type="binding site" evidence="2">
    <location>
        <position position="156"/>
    </location>
    <ligand>
        <name>theobromine</name>
        <dbReference type="ChEBI" id="CHEBI:28946"/>
    </ligand>
</feature>
<feature type="binding site" evidence="4">
    <location>
        <position position="172"/>
    </location>
    <ligand>
        <name>Mg(2+)</name>
        <dbReference type="ChEBI" id="CHEBI:18420"/>
    </ligand>
</feature>
<feature type="binding site" evidence="4">
    <location>
        <position position="258"/>
    </location>
    <ligand>
        <name>Mg(2+)</name>
        <dbReference type="ChEBI" id="CHEBI:18420"/>
    </ligand>
</feature>
<feature type="binding site" evidence="4">
    <location>
        <position position="260"/>
    </location>
    <ligand>
        <name>Mg(2+)</name>
        <dbReference type="ChEBI" id="CHEBI:18420"/>
    </ligand>
</feature>
<feature type="binding site" evidence="4">
    <location>
        <position position="261"/>
    </location>
    <ligand>
        <name>Mg(2+)</name>
        <dbReference type="ChEBI" id="CHEBI:18420"/>
    </ligand>
</feature>
<feature type="binding site" evidence="2">
    <location>
        <position position="314"/>
    </location>
    <ligand>
        <name>theobromine</name>
        <dbReference type="ChEBI" id="CHEBI:28946"/>
    </ligand>
</feature>
<feature type="site" description="Involved in substrate discrimination" evidence="5">
    <location>
        <position position="149"/>
    </location>
</feature>
<feature type="site" description="Involved in substrate discrimination" evidence="3">
    <location>
        <position position="220"/>
    </location>
</feature>
<feature type="site" description="Involved in substrate discrimination" evidence="5">
    <location>
        <position position="264"/>
    </location>
</feature>
<feature type="site" description="Involved in substrate discrimination" evidence="5">
    <location>
        <position position="325"/>
    </location>
</feature>
<feature type="splice variant" id="VSP_060867" description="In isoform 4.">
    <location>
        <begin position="1"/>
        <end position="29"/>
    </location>
</feature>
<feature type="splice variant" id="VSP_060868" description="In isoform 3.">
    <original>GLVDEGKLDSF</original>
    <variation>AKCQIFNSFLI</variation>
    <location>
        <begin position="250"/>
        <end position="260"/>
    </location>
</feature>
<feature type="splice variant" id="VSP_060869" description="In isoform 3.">
    <location>
        <begin position="261"/>
        <end position="364"/>
    </location>
</feature>
<feature type="splice variant" id="VSP_060870" description="In isoform 2.">
    <location>
        <begin position="363"/>
        <end position="364"/>
    </location>
</feature>
<feature type="sequence conflict" description="In Ref. 1; EOY17884." evidence="6" ref="1">
    <location>
        <begin position="247"/>
        <end position="249"/>
    </location>
</feature>
<accession>A0A061FKM4</accession>
<accession>A0A061FLA5</accession>
<accession>A0A061FLB1</accession>
<accession>A0A061FMG9</accession>
<accession>A0A061FTC7</accession>
<name>BTS5_THECC</name>
<keyword id="KW-0025">Alternative splicing</keyword>
<keyword id="KW-0460">Magnesium</keyword>
<keyword id="KW-0479">Metal-binding</keyword>
<keyword id="KW-0489">Methyltransferase</keyword>
<keyword id="KW-1185">Reference proteome</keyword>
<keyword id="KW-0808">Transferase</keyword>
<reference key="1">
    <citation type="journal article" date="2013" name="Genome Biol.">
        <title>The genome sequence of the most widely cultivated cacao type and its use to identify candidate genes regulating pod color.</title>
        <authorList>
            <person name="Motamayor J.C."/>
            <person name="Mockaitis K."/>
            <person name="Schmutz J."/>
            <person name="Haiminen N."/>
            <person name="Livingstone D. III"/>
            <person name="Cornejo O."/>
            <person name="Findley S.D."/>
            <person name="Zheng P."/>
            <person name="Utro F."/>
            <person name="Royaert S."/>
            <person name="Saski C."/>
            <person name="Jenkins J."/>
            <person name="Podicheti R."/>
            <person name="Zhao M."/>
            <person name="Scheffler B.E."/>
            <person name="Stack J.C."/>
            <person name="Feltus F.A."/>
            <person name="Mustiga G.M."/>
            <person name="Amores F."/>
            <person name="Phillips W."/>
            <person name="Marelli J.P."/>
            <person name="May G.D."/>
            <person name="Shapiro H."/>
            <person name="Ma J."/>
            <person name="Bustamante C.D."/>
            <person name="Schnell R.J."/>
            <person name="Main D."/>
            <person name="Gilbert D."/>
            <person name="Parida L."/>
            <person name="Kuhn D.N."/>
        </authorList>
    </citation>
    <scope>NUCLEOTIDE SEQUENCE [LARGE SCALE GENOMIC DNA] (ISOFORMS 1; 2; 3 AND 4)</scope>
    <source>
        <strain>cv. Matina 1-6</strain>
    </source>
</reference>
<reference key="2">
    <citation type="journal article" date="2008" name="Phytochemistry">
        <title>Caffeine and related purine alkaloids: biosynthesis, catabolism, function and genetic engineering.</title>
        <authorList>
            <person name="Ashihara H."/>
            <person name="Sano H."/>
            <person name="Crozier A."/>
        </authorList>
    </citation>
    <scope>REVIEW ON CAFFEINE BIOSYNTHESIS</scope>
</reference>
<evidence type="ECO:0000250" key="1">
    <source>
        <dbReference type="UniProtKB" id="A0A061FMF5"/>
    </source>
</evidence>
<evidence type="ECO:0000250" key="2">
    <source>
        <dbReference type="UniProtKB" id="A0A6C0WW36"/>
    </source>
</evidence>
<evidence type="ECO:0000250" key="3">
    <source>
        <dbReference type="UniProtKB" id="Q2HXI6"/>
    </source>
</evidence>
<evidence type="ECO:0000250" key="4">
    <source>
        <dbReference type="UniProtKB" id="Q9FLN8"/>
    </source>
</evidence>
<evidence type="ECO:0000250" key="5">
    <source>
        <dbReference type="UniProtKB" id="Q9FZN8"/>
    </source>
</evidence>
<evidence type="ECO:0000305" key="6"/>
<evidence type="ECO:0000312" key="7">
    <source>
        <dbReference type="EMBL" id="EOY17880.1"/>
    </source>
</evidence>
<evidence type="ECO:0000312" key="8">
    <source>
        <dbReference type="EMBL" id="EOY17881.1"/>
    </source>
</evidence>
<evidence type="ECO:0000312" key="9">
    <source>
        <dbReference type="EMBL" id="EOY17885.1"/>
    </source>
</evidence>
<evidence type="ECO:0000312" key="10">
    <source>
        <dbReference type="EMBL" id="EOY17887.1"/>
    </source>
</evidence>
<gene>
    <name evidence="7 8" type="ORF">TCM_042587</name>
    <name evidence="9 10" type="ORF">TCM_042590</name>
</gene>
<proteinExistence type="inferred from homology"/>
<sequence>MEAVKDVLCMNNGVGENSYVKAEALTIKVMAITKPIVPKAVQSLFTETDHSIPLQVVNVADLGCAVGPQPLEFMSTVIESILKKCGEMGREMPEIQFFLNDLVGNDFNTLFKGLSVVQEKYKKVSWFAMGAPGSFHGRLFPRNSMHLVYSCYSVHWLSEAPKITNEAGLPLNKGKIYMSKTSPPAVTKAYLSQFQEDFSSLLKFRSQELAPNGRVVLIFNGRQTADPTNKDTCYTWDLLAEALSYLVSQGLVDEGKLDSFNVPYYNPSQEEIKYLVDKEGSLTIEFIDTIELEIGGPNGYWSSPESRIRGHRCFTEPLLSHQFGERLMDKLYDKATQILVEDYKHGKEATKNIGIAVVLKKKKL</sequence>
<organism>
    <name type="scientific">Theobroma cacao</name>
    <name type="common">Cacao</name>
    <name type="synonym">Cocoa</name>
    <dbReference type="NCBI Taxonomy" id="3641"/>
    <lineage>
        <taxon>Eukaryota</taxon>
        <taxon>Viridiplantae</taxon>
        <taxon>Streptophyta</taxon>
        <taxon>Embryophyta</taxon>
        <taxon>Tracheophyta</taxon>
        <taxon>Spermatophyta</taxon>
        <taxon>Magnoliopsida</taxon>
        <taxon>eudicotyledons</taxon>
        <taxon>Gunneridae</taxon>
        <taxon>Pentapetalae</taxon>
        <taxon>rosids</taxon>
        <taxon>malvids</taxon>
        <taxon>Malvales</taxon>
        <taxon>Malvaceae</taxon>
        <taxon>Byttnerioideae</taxon>
        <taxon>Theobroma</taxon>
    </lineage>
</organism>
<dbReference type="EC" id="2.1.1.159" evidence="1"/>
<dbReference type="EMBL" id="CM001888">
    <property type="protein sequence ID" value="EOY17880.1"/>
    <property type="molecule type" value="Genomic_DNA"/>
</dbReference>
<dbReference type="EMBL" id="CM001888">
    <property type="protein sequence ID" value="EOY17881.1"/>
    <property type="molecule type" value="Genomic_DNA"/>
</dbReference>
<dbReference type="EMBL" id="CM001888">
    <property type="protein sequence ID" value="EOY17884.1"/>
    <property type="molecule type" value="Genomic_DNA"/>
</dbReference>
<dbReference type="EMBL" id="CM001888">
    <property type="protein sequence ID" value="EOY17885.1"/>
    <property type="molecule type" value="Genomic_DNA"/>
</dbReference>
<dbReference type="EMBL" id="CM001888">
    <property type="protein sequence ID" value="EOY17886.1"/>
    <property type="molecule type" value="Genomic_DNA"/>
</dbReference>
<dbReference type="EMBL" id="CM001888">
    <property type="protein sequence ID" value="EOY17887.1"/>
    <property type="molecule type" value="Genomic_DNA"/>
</dbReference>
<dbReference type="SMR" id="A0A061FKM4"/>
<dbReference type="EnsemblPlants" id="EOY17880">
    <molecule id="A0A061FKM4-1"/>
    <property type="protein sequence ID" value="EOY17880"/>
    <property type="gene ID" value="TCM_042587"/>
</dbReference>
<dbReference type="EnsemblPlants" id="EOY17885">
    <molecule id="A0A061FKM4-1"/>
    <property type="protein sequence ID" value="EOY17885"/>
    <property type="gene ID" value="TCM_042590"/>
</dbReference>
<dbReference type="Gramene" id="EOY17880">
    <molecule id="A0A061FKM4-1"/>
    <property type="protein sequence ID" value="EOY17880"/>
    <property type="gene ID" value="TCM_042587"/>
</dbReference>
<dbReference type="Gramene" id="EOY17885">
    <molecule id="A0A061FKM4-1"/>
    <property type="protein sequence ID" value="EOY17885"/>
    <property type="gene ID" value="TCM_042590"/>
</dbReference>
<dbReference type="eggNOG" id="ENOG502QQVK">
    <property type="taxonomic scope" value="Eukaryota"/>
</dbReference>
<dbReference type="HOGENOM" id="CLU_019628_2_0_1"/>
<dbReference type="InParanoid" id="A0A061FKM4"/>
<dbReference type="OMA" id="RIRGHRC"/>
<dbReference type="Proteomes" id="UP000026915">
    <property type="component" value="Chromosome 10"/>
</dbReference>
<dbReference type="Proteomes" id="UP000694886">
    <property type="component" value="Unplaced"/>
</dbReference>
<dbReference type="GO" id="GO:0046872">
    <property type="term" value="F:metal ion binding"/>
    <property type="evidence" value="ECO:0007669"/>
    <property type="project" value="UniProtKB-KW"/>
</dbReference>
<dbReference type="GO" id="GO:0008757">
    <property type="term" value="F:S-adenosylmethionine-dependent methyltransferase activity"/>
    <property type="evidence" value="ECO:0000318"/>
    <property type="project" value="GO_Central"/>
</dbReference>
<dbReference type="GO" id="GO:0032259">
    <property type="term" value="P:methylation"/>
    <property type="evidence" value="ECO:0000318"/>
    <property type="project" value="GO_Central"/>
</dbReference>
<dbReference type="Gene3D" id="1.10.1200.270">
    <property type="entry name" value="Methyltransferase, alpha-helical capping domain"/>
    <property type="match status" value="1"/>
</dbReference>
<dbReference type="Gene3D" id="3.40.50.150">
    <property type="entry name" value="Vaccinia Virus protein VP39"/>
    <property type="match status" value="1"/>
</dbReference>
<dbReference type="InterPro" id="IPR005299">
    <property type="entry name" value="MeTrfase_7"/>
</dbReference>
<dbReference type="InterPro" id="IPR042086">
    <property type="entry name" value="MeTrfase_capping"/>
</dbReference>
<dbReference type="InterPro" id="IPR029063">
    <property type="entry name" value="SAM-dependent_MTases_sf"/>
</dbReference>
<dbReference type="PANTHER" id="PTHR31009">
    <property type="entry name" value="S-ADENOSYL-L-METHIONINE:CARBOXYL METHYLTRANSFERASE FAMILY PROTEIN"/>
    <property type="match status" value="1"/>
</dbReference>
<dbReference type="Pfam" id="PF03492">
    <property type="entry name" value="Methyltransf_7"/>
    <property type="match status" value="1"/>
</dbReference>
<dbReference type="SUPFAM" id="SSF53335">
    <property type="entry name" value="S-adenosyl-L-methionine-dependent methyltransferases"/>
    <property type="match status" value="1"/>
</dbReference>